<gene>
    <name type="primary">HTR1D</name>
</gene>
<comment type="function">
    <text evidence="1 5 6">G-protein coupled receptor for 5-hydroxytryptamine (serotonin) (PubMed:8543023, PubMed:8878052). Also functions as a receptor for ergot alkaloid derivatives, various anxiolytic and antidepressant drugs and other psychoactive substances (By similarity). Ligand binding causes a conformation change that triggers signaling via guanine nucleotide-binding proteins (G proteins) and modulates the activity of downstream effectors, such as adenylate cyclase (By similarity). HTR1D is coupled to G(i)/G(o) G alpha proteins and mediates inhibitory neurotransmission by inhibiting adenylate cyclase activity (By similarity). Regulates the release of 5-hydroxytryptamine in the brain, and thereby affects neural activity (By similarity). May also play a role in regulating the release of other neurotransmitters (By similarity). May play a role in vasoconstriction (By similarity).</text>
</comment>
<comment type="subunit">
    <text evidence="1">Homodimer. Heterodimer with HTR1B.</text>
</comment>
<comment type="subcellular location">
    <subcellularLocation>
        <location evidence="5 6">Cell membrane</location>
        <topology evidence="1">Multi-pass membrane protein</topology>
    </subcellularLocation>
</comment>
<comment type="similarity">
    <text evidence="4">Belongs to the G-protein coupled receptor 1 family.</text>
</comment>
<reference key="1">
    <citation type="journal article" date="1995" name="FEBS Lett.">
        <title>Cloning and characterisation of the rabbit 5-HT1D alpha and 5-HT1D beta receptors.</title>
        <authorList>
            <person name="Harwood G.S."/>
            <person name="Lockyer M."/>
            <person name="Giles H."/>
            <person name="Fairweather N."/>
        </authorList>
    </citation>
    <scope>NUCLEOTIDE SEQUENCE [GENOMIC DNA]</scope>
    <scope>FUNCTION</scope>
    <scope>SUBCELLULAR LOCATION</scope>
    <source>
        <tissue>Liver</tissue>
    </source>
</reference>
<reference key="2">
    <citation type="journal article" date="1996" name="Naunyn Schmiedebergs Arch. Pharmacol.">
        <title>Differences in ligand binding profiles between cloned rabbit and human 5-HT1D alpha and 5-HT1D beta receptors: ketanserin and methiothepin distinguish rabbit 5-HT1D receptor subtypes.</title>
        <authorList>
            <person name="Bard J.A."/>
            <person name="Kucharewicz S.A."/>
            <person name="Zgombick J.M."/>
            <person name="Weinshank R.L."/>
            <person name="Branchek T.A."/>
            <person name="Cohen M.L."/>
        </authorList>
    </citation>
    <scope>NUCLEOTIDE SEQUENCE [GENOMIC DNA]</scope>
    <scope>FUNCTION</scope>
    <scope>SUBCELLULAR LOCATION</scope>
    <source>
        <strain>New Zealand white</strain>
    </source>
</reference>
<keyword id="KW-1003">Cell membrane</keyword>
<keyword id="KW-1015">Disulfide bond</keyword>
<keyword id="KW-0297">G-protein coupled receptor</keyword>
<keyword id="KW-0325">Glycoprotein</keyword>
<keyword id="KW-0472">Membrane</keyword>
<keyword id="KW-0675">Receptor</keyword>
<keyword id="KW-1185">Reference proteome</keyword>
<keyword id="KW-0807">Transducer</keyword>
<keyword id="KW-0812">Transmembrane</keyword>
<keyword id="KW-1133">Transmembrane helix</keyword>
<accession>P49145</accession>
<accession>O02823</accession>
<organism>
    <name type="scientific">Oryctolagus cuniculus</name>
    <name type="common">Rabbit</name>
    <dbReference type="NCBI Taxonomy" id="9986"/>
    <lineage>
        <taxon>Eukaryota</taxon>
        <taxon>Metazoa</taxon>
        <taxon>Chordata</taxon>
        <taxon>Craniata</taxon>
        <taxon>Vertebrata</taxon>
        <taxon>Euteleostomi</taxon>
        <taxon>Mammalia</taxon>
        <taxon>Eutheria</taxon>
        <taxon>Euarchontoglires</taxon>
        <taxon>Glires</taxon>
        <taxon>Lagomorpha</taxon>
        <taxon>Leporidae</taxon>
        <taxon>Oryctolagus</taxon>
    </lineage>
</organism>
<feature type="chain" id="PRO_0000068930" description="5-hydroxytryptamine receptor 1D">
    <location>
        <begin position="1"/>
        <end position="377"/>
    </location>
</feature>
<feature type="transmembrane region" description="Helical; Name=1" evidence="1">
    <location>
        <begin position="39"/>
        <end position="64"/>
    </location>
</feature>
<feature type="transmembrane region" description="Helical; Name=2" evidence="1">
    <location>
        <begin position="76"/>
        <end position="97"/>
    </location>
</feature>
<feature type="transmembrane region" description="Helical; Name=3" evidence="1">
    <location>
        <begin position="110"/>
        <end position="134"/>
    </location>
</feature>
<feature type="transmembrane region" description="Helical; Name=4" evidence="1">
    <location>
        <begin position="155"/>
        <end position="176"/>
    </location>
</feature>
<feature type="transmembrane region" description="Helical; Name=5" evidence="1">
    <location>
        <begin position="195"/>
        <end position="218"/>
    </location>
</feature>
<feature type="transmembrane region" description="Helical; Name=6" evidence="1">
    <location>
        <begin position="301"/>
        <end position="326"/>
    </location>
</feature>
<feature type="transmembrane region" description="Helical; Name=7" evidence="1">
    <location>
        <begin position="336"/>
        <end position="359"/>
    </location>
</feature>
<feature type="short sequence motif" description="DRY motif; important for ligand-induced conformation changes" evidence="2">
    <location>
        <begin position="135"/>
        <end position="137"/>
    </location>
</feature>
<feature type="short sequence motif" description="NPxxY motif; important for ligand-induced conformation changes and signaling" evidence="2">
    <location>
        <begin position="352"/>
        <end position="356"/>
    </location>
</feature>
<feature type="binding site" evidence="1">
    <location>
        <position position="118"/>
    </location>
    <ligand>
        <name>serotonin</name>
        <dbReference type="ChEBI" id="CHEBI:350546"/>
    </ligand>
</feature>
<feature type="binding site" evidence="1">
    <location>
        <position position="122"/>
    </location>
    <ligand>
        <name>serotonin</name>
        <dbReference type="ChEBI" id="CHEBI:350546"/>
    </ligand>
</feature>
<feature type="binding site" evidence="1">
    <location>
        <position position="321"/>
    </location>
    <ligand>
        <name>serotonin</name>
        <dbReference type="ChEBI" id="CHEBI:350546"/>
    </ligand>
</feature>
<feature type="glycosylation site" description="N-linked (GlcNAc...) asparagine" evidence="3">
    <location>
        <position position="5"/>
    </location>
</feature>
<feature type="glycosylation site" description="N-linked (GlcNAc...) asparagine" evidence="3">
    <location>
        <position position="17"/>
    </location>
</feature>
<feature type="glycosylation site" description="N-linked (GlcNAc...) asparagine" evidence="3">
    <location>
        <position position="21"/>
    </location>
</feature>
<feature type="disulfide bond" evidence="4">
    <location>
        <begin position="111"/>
        <end position="188"/>
    </location>
</feature>
<feature type="sequence conflict" description="In Ref. 2; AAB58466." evidence="7" ref="2">
    <original>A</original>
    <variation>I</variation>
    <location>
        <position position="28"/>
    </location>
</feature>
<sequence>MSPSNQSAEGLPQEAANRSLNATGTPEAWDPGTLQALKISLAVVLSIITVATVLSNTFVLTTILLTRKLHTPANYLIGSLATTDLLVSILVMPISIAYTITHTWNFGQVLCDIWVSSDITCCTASILHLCVIALDRYWAITDALEYSKRRTAGHAAAMIAVVWAISICISIPPLFWRQAKAHEEVSDCLVNTSQISYTIYSTCGAFYIPSVLLIVLYGRIYMAARNRILNPPSLYGKRFTTAHLITGSAGSSLCSLSPSLGEGHSHSAGSPLFFNPVRIKLADSVLERKRISAARERKATKTLGIILGAFIGCWLPFFVASLVLPICRDSCWMPPGLFDFFTWLGYLNSLINPIIYTVFNEDFRQAFQRVIHFRKAF</sequence>
<proteinExistence type="inferred from homology"/>
<dbReference type="EMBL" id="Z50162">
    <property type="protein sequence ID" value="CAA90530.1"/>
    <property type="molecule type" value="Genomic_DNA"/>
</dbReference>
<dbReference type="EMBL" id="U60825">
    <property type="protein sequence ID" value="AAB58466.1"/>
    <property type="molecule type" value="Genomic_DNA"/>
</dbReference>
<dbReference type="PIR" id="S68423">
    <property type="entry name" value="S68423"/>
</dbReference>
<dbReference type="RefSeq" id="NP_001164624.1">
    <property type="nucleotide sequence ID" value="NM_001171153.1"/>
</dbReference>
<dbReference type="RefSeq" id="XP_017201009.1">
    <property type="nucleotide sequence ID" value="XM_017345520.3"/>
</dbReference>
<dbReference type="RefSeq" id="XP_017201010.1">
    <property type="nucleotide sequence ID" value="XM_017345521.1"/>
</dbReference>
<dbReference type="RefSeq" id="XP_017201011.1">
    <property type="nucleotide sequence ID" value="XM_017345522.1"/>
</dbReference>
<dbReference type="RefSeq" id="XP_017201013.1">
    <property type="nucleotide sequence ID" value="XM_017345524.1"/>
</dbReference>
<dbReference type="SMR" id="P49145"/>
<dbReference type="FunCoup" id="P49145">
    <property type="interactions" value="142"/>
</dbReference>
<dbReference type="STRING" id="9986.ENSOCUP00000009551"/>
<dbReference type="GlyCosmos" id="P49145">
    <property type="glycosylation" value="3 sites, No reported glycans"/>
</dbReference>
<dbReference type="PaxDb" id="9986-ENSOCUP00000009551"/>
<dbReference type="Ensembl" id="ENSOCUT00000011099.1">
    <property type="protein sequence ID" value="ENSOCUP00000009551.1"/>
    <property type="gene ID" value="ENSOCUG00000011102.1"/>
</dbReference>
<dbReference type="GeneID" id="100328964"/>
<dbReference type="KEGG" id="ocu:100328964"/>
<dbReference type="CTD" id="3352"/>
<dbReference type="eggNOG" id="KOG3656">
    <property type="taxonomic scope" value="Eukaryota"/>
</dbReference>
<dbReference type="GeneTree" id="ENSGT01010000222287"/>
<dbReference type="HOGENOM" id="CLU_009579_11_1_1"/>
<dbReference type="InParanoid" id="P49145"/>
<dbReference type="OMA" id="VWMISIS"/>
<dbReference type="OrthoDB" id="5956310at2759"/>
<dbReference type="TreeFam" id="TF316350"/>
<dbReference type="Proteomes" id="UP000001811">
    <property type="component" value="Chromosome 13"/>
</dbReference>
<dbReference type="Bgee" id="ENSOCUG00000011102">
    <property type="expression patterns" value="Expressed in adult mammalian kidney and 2 other cell types or tissues"/>
</dbReference>
<dbReference type="GO" id="GO:0005886">
    <property type="term" value="C:plasma membrane"/>
    <property type="evidence" value="ECO:0000250"/>
    <property type="project" value="UniProtKB"/>
</dbReference>
<dbReference type="GO" id="GO:0045202">
    <property type="term" value="C:synapse"/>
    <property type="evidence" value="ECO:0007669"/>
    <property type="project" value="GOC"/>
</dbReference>
<dbReference type="GO" id="GO:0004993">
    <property type="term" value="F:G protein-coupled serotonin receptor activity"/>
    <property type="evidence" value="ECO:0000250"/>
    <property type="project" value="UniProtKB"/>
</dbReference>
<dbReference type="GO" id="GO:0051378">
    <property type="term" value="F:serotonin binding"/>
    <property type="evidence" value="ECO:0007669"/>
    <property type="project" value="Ensembl"/>
</dbReference>
<dbReference type="GO" id="GO:0071880">
    <property type="term" value="P:adenylate cyclase-activating adrenergic receptor signaling pathway"/>
    <property type="evidence" value="ECO:0007669"/>
    <property type="project" value="TreeGrafter"/>
</dbReference>
<dbReference type="GO" id="GO:0007193">
    <property type="term" value="P:adenylate cyclase-inhibiting G protein-coupled receptor signaling pathway"/>
    <property type="evidence" value="ECO:0000250"/>
    <property type="project" value="UniProtKB"/>
</dbReference>
<dbReference type="GO" id="GO:0007268">
    <property type="term" value="P:chemical synaptic transmission"/>
    <property type="evidence" value="ECO:0007669"/>
    <property type="project" value="InterPro"/>
</dbReference>
<dbReference type="GO" id="GO:0043410">
    <property type="term" value="P:positive regulation of MAPK cascade"/>
    <property type="evidence" value="ECO:0007669"/>
    <property type="project" value="TreeGrafter"/>
</dbReference>
<dbReference type="GO" id="GO:0050795">
    <property type="term" value="P:regulation of behavior"/>
    <property type="evidence" value="ECO:0007669"/>
    <property type="project" value="InterPro"/>
</dbReference>
<dbReference type="GO" id="GO:0040012">
    <property type="term" value="P:regulation of locomotion"/>
    <property type="evidence" value="ECO:0007669"/>
    <property type="project" value="InterPro"/>
</dbReference>
<dbReference type="GO" id="GO:0009636">
    <property type="term" value="P:response to toxic substance"/>
    <property type="evidence" value="ECO:0007669"/>
    <property type="project" value="Ensembl"/>
</dbReference>
<dbReference type="GO" id="GO:0006939">
    <property type="term" value="P:smooth muscle contraction"/>
    <property type="evidence" value="ECO:0007669"/>
    <property type="project" value="InterPro"/>
</dbReference>
<dbReference type="GO" id="GO:0042310">
    <property type="term" value="P:vasoconstriction"/>
    <property type="evidence" value="ECO:0007669"/>
    <property type="project" value="InterPro"/>
</dbReference>
<dbReference type="CDD" id="cd15333">
    <property type="entry name" value="7tmA_5-HT1B_1D"/>
    <property type="match status" value="1"/>
</dbReference>
<dbReference type="Gene3D" id="1.20.1070.10">
    <property type="entry name" value="Rhodopsin 7-helix transmembrane proteins"/>
    <property type="match status" value="1"/>
</dbReference>
<dbReference type="InterPro" id="IPR000505">
    <property type="entry name" value="5HT1D_rcpt"/>
</dbReference>
<dbReference type="InterPro" id="IPR002231">
    <property type="entry name" value="5HT_rcpt"/>
</dbReference>
<dbReference type="InterPro" id="IPR000276">
    <property type="entry name" value="GPCR_Rhodpsn"/>
</dbReference>
<dbReference type="InterPro" id="IPR017452">
    <property type="entry name" value="GPCR_Rhodpsn_7TM"/>
</dbReference>
<dbReference type="PANTHER" id="PTHR24248:SF196">
    <property type="entry name" value="5-HYDROXYTRYPTAMINE RECEPTOR 1D"/>
    <property type="match status" value="1"/>
</dbReference>
<dbReference type="PANTHER" id="PTHR24248">
    <property type="entry name" value="ADRENERGIC RECEPTOR-RELATED G-PROTEIN COUPLED RECEPTOR"/>
    <property type="match status" value="1"/>
</dbReference>
<dbReference type="Pfam" id="PF00001">
    <property type="entry name" value="7tm_1"/>
    <property type="match status" value="1"/>
</dbReference>
<dbReference type="PRINTS" id="PR00514">
    <property type="entry name" value="5HT1DRECEPTR"/>
</dbReference>
<dbReference type="PRINTS" id="PR01101">
    <property type="entry name" value="5HTRECEPTOR"/>
</dbReference>
<dbReference type="PRINTS" id="PR00237">
    <property type="entry name" value="GPCRRHODOPSN"/>
</dbReference>
<dbReference type="SMART" id="SM01381">
    <property type="entry name" value="7TM_GPCR_Srsx"/>
    <property type="match status" value="1"/>
</dbReference>
<dbReference type="SUPFAM" id="SSF81321">
    <property type="entry name" value="Family A G protein-coupled receptor-like"/>
    <property type="match status" value="1"/>
</dbReference>
<dbReference type="PROSITE" id="PS00237">
    <property type="entry name" value="G_PROTEIN_RECEP_F1_1"/>
    <property type="match status" value="1"/>
</dbReference>
<dbReference type="PROSITE" id="PS50262">
    <property type="entry name" value="G_PROTEIN_RECEP_F1_2"/>
    <property type="match status" value="1"/>
</dbReference>
<protein>
    <recommendedName>
        <fullName>5-hydroxytryptamine receptor 1D</fullName>
        <shortName>5-HT-1D</shortName>
        <shortName>5-HT1D</shortName>
    </recommendedName>
    <alternativeName>
        <fullName>5-HT-1D-alpha</fullName>
    </alternativeName>
    <alternativeName>
        <fullName>Serotonin receptor 1D</fullName>
    </alternativeName>
</protein>
<name>5HT1D_RABIT</name>
<evidence type="ECO:0000250" key="1">
    <source>
        <dbReference type="UniProtKB" id="P28221"/>
    </source>
</evidence>
<evidence type="ECO:0000250" key="2">
    <source>
        <dbReference type="UniProtKB" id="P41595"/>
    </source>
</evidence>
<evidence type="ECO:0000255" key="3"/>
<evidence type="ECO:0000255" key="4">
    <source>
        <dbReference type="PROSITE-ProRule" id="PRU00521"/>
    </source>
</evidence>
<evidence type="ECO:0000269" key="5">
    <source>
    </source>
</evidence>
<evidence type="ECO:0000269" key="6">
    <source>
    </source>
</evidence>
<evidence type="ECO:0000305" key="7"/>